<dbReference type="EMBL" id="CP000127">
    <property type="protein sequence ID" value="ABA58759.1"/>
    <property type="molecule type" value="Genomic_DNA"/>
</dbReference>
<dbReference type="RefSeq" id="WP_002809828.1">
    <property type="nucleotide sequence ID" value="NC_007484.1"/>
</dbReference>
<dbReference type="SMR" id="Q3J8T7"/>
<dbReference type="FunCoup" id="Q3J8T7">
    <property type="interactions" value="693"/>
</dbReference>
<dbReference type="STRING" id="323261.Noc_2301"/>
<dbReference type="KEGG" id="noc:Noc_2301"/>
<dbReference type="eggNOG" id="COG0522">
    <property type="taxonomic scope" value="Bacteria"/>
</dbReference>
<dbReference type="HOGENOM" id="CLU_092403_0_2_6"/>
<dbReference type="InParanoid" id="Q3J8T7"/>
<dbReference type="Proteomes" id="UP000006838">
    <property type="component" value="Chromosome"/>
</dbReference>
<dbReference type="GO" id="GO:0015935">
    <property type="term" value="C:small ribosomal subunit"/>
    <property type="evidence" value="ECO:0007669"/>
    <property type="project" value="InterPro"/>
</dbReference>
<dbReference type="GO" id="GO:0019843">
    <property type="term" value="F:rRNA binding"/>
    <property type="evidence" value="ECO:0007669"/>
    <property type="project" value="UniProtKB-UniRule"/>
</dbReference>
<dbReference type="GO" id="GO:0003735">
    <property type="term" value="F:structural constituent of ribosome"/>
    <property type="evidence" value="ECO:0007669"/>
    <property type="project" value="InterPro"/>
</dbReference>
<dbReference type="GO" id="GO:0042274">
    <property type="term" value="P:ribosomal small subunit biogenesis"/>
    <property type="evidence" value="ECO:0007669"/>
    <property type="project" value="TreeGrafter"/>
</dbReference>
<dbReference type="GO" id="GO:0006412">
    <property type="term" value="P:translation"/>
    <property type="evidence" value="ECO:0007669"/>
    <property type="project" value="UniProtKB-UniRule"/>
</dbReference>
<dbReference type="CDD" id="cd00165">
    <property type="entry name" value="S4"/>
    <property type="match status" value="1"/>
</dbReference>
<dbReference type="FunFam" id="1.10.1050.10:FF:000001">
    <property type="entry name" value="30S ribosomal protein S4"/>
    <property type="match status" value="1"/>
</dbReference>
<dbReference type="FunFam" id="3.10.290.10:FF:000001">
    <property type="entry name" value="30S ribosomal protein S4"/>
    <property type="match status" value="1"/>
</dbReference>
<dbReference type="Gene3D" id="1.10.1050.10">
    <property type="entry name" value="Ribosomal Protein S4 Delta 41, Chain A, domain 1"/>
    <property type="match status" value="1"/>
</dbReference>
<dbReference type="Gene3D" id="3.10.290.10">
    <property type="entry name" value="RNA-binding S4 domain"/>
    <property type="match status" value="1"/>
</dbReference>
<dbReference type="HAMAP" id="MF_01306_B">
    <property type="entry name" value="Ribosomal_uS4_B"/>
    <property type="match status" value="1"/>
</dbReference>
<dbReference type="InterPro" id="IPR022801">
    <property type="entry name" value="Ribosomal_uS4"/>
</dbReference>
<dbReference type="InterPro" id="IPR005709">
    <property type="entry name" value="Ribosomal_uS4_bac-type"/>
</dbReference>
<dbReference type="InterPro" id="IPR018079">
    <property type="entry name" value="Ribosomal_uS4_CS"/>
</dbReference>
<dbReference type="InterPro" id="IPR001912">
    <property type="entry name" value="Ribosomal_uS4_N"/>
</dbReference>
<dbReference type="InterPro" id="IPR002942">
    <property type="entry name" value="S4_RNA-bd"/>
</dbReference>
<dbReference type="InterPro" id="IPR036986">
    <property type="entry name" value="S4_RNA-bd_sf"/>
</dbReference>
<dbReference type="NCBIfam" id="NF003717">
    <property type="entry name" value="PRK05327.1"/>
    <property type="match status" value="1"/>
</dbReference>
<dbReference type="NCBIfam" id="TIGR01017">
    <property type="entry name" value="rpsD_bact"/>
    <property type="match status" value="1"/>
</dbReference>
<dbReference type="PANTHER" id="PTHR11831">
    <property type="entry name" value="30S 40S RIBOSOMAL PROTEIN"/>
    <property type="match status" value="1"/>
</dbReference>
<dbReference type="PANTHER" id="PTHR11831:SF4">
    <property type="entry name" value="SMALL RIBOSOMAL SUBUNIT PROTEIN US4M"/>
    <property type="match status" value="1"/>
</dbReference>
<dbReference type="Pfam" id="PF00163">
    <property type="entry name" value="Ribosomal_S4"/>
    <property type="match status" value="1"/>
</dbReference>
<dbReference type="Pfam" id="PF01479">
    <property type="entry name" value="S4"/>
    <property type="match status" value="1"/>
</dbReference>
<dbReference type="SMART" id="SM01390">
    <property type="entry name" value="Ribosomal_S4"/>
    <property type="match status" value="1"/>
</dbReference>
<dbReference type="SMART" id="SM00363">
    <property type="entry name" value="S4"/>
    <property type="match status" value="1"/>
</dbReference>
<dbReference type="SUPFAM" id="SSF55174">
    <property type="entry name" value="Alpha-L RNA-binding motif"/>
    <property type="match status" value="1"/>
</dbReference>
<dbReference type="PROSITE" id="PS00632">
    <property type="entry name" value="RIBOSOMAL_S4"/>
    <property type="match status" value="1"/>
</dbReference>
<dbReference type="PROSITE" id="PS50889">
    <property type="entry name" value="S4"/>
    <property type="match status" value="1"/>
</dbReference>
<reference key="1">
    <citation type="journal article" date="2006" name="Appl. Environ. Microbiol.">
        <title>Complete genome sequence of the marine, chemolithoautotrophic, ammonia-oxidizing bacterium Nitrosococcus oceani ATCC 19707.</title>
        <authorList>
            <person name="Klotz M.G."/>
            <person name="Arp D.J."/>
            <person name="Chain P.S.G."/>
            <person name="El-Sheikh A.F."/>
            <person name="Hauser L.J."/>
            <person name="Hommes N.G."/>
            <person name="Larimer F.W."/>
            <person name="Malfatti S.A."/>
            <person name="Norton J.M."/>
            <person name="Poret-Peterson A.T."/>
            <person name="Vergez L.M."/>
            <person name="Ward B.B."/>
        </authorList>
    </citation>
    <scope>NUCLEOTIDE SEQUENCE [LARGE SCALE GENOMIC DNA]</scope>
    <source>
        <strain>ATCC 19707 / BCRC 17464 / JCM 30415 / NCIMB 11848 / C-107</strain>
    </source>
</reference>
<organism>
    <name type="scientific">Nitrosococcus oceani (strain ATCC 19707 / BCRC 17464 / JCM 30415 / NCIMB 11848 / C-107)</name>
    <dbReference type="NCBI Taxonomy" id="323261"/>
    <lineage>
        <taxon>Bacteria</taxon>
        <taxon>Pseudomonadati</taxon>
        <taxon>Pseudomonadota</taxon>
        <taxon>Gammaproteobacteria</taxon>
        <taxon>Chromatiales</taxon>
        <taxon>Chromatiaceae</taxon>
        <taxon>Nitrosococcus</taxon>
    </lineage>
</organism>
<protein>
    <recommendedName>
        <fullName evidence="1">Small ribosomal subunit protein uS4</fullName>
    </recommendedName>
    <alternativeName>
        <fullName evidence="2">30S ribosomal protein S4</fullName>
    </alternativeName>
</protein>
<sequence length="208" mass="23828">MAKYTGPKLKQARREGTDLFLKSGVRPIDSKCKIEQVPGQHGAGARRARMSDYALQLREKQKLRRMYGVLERQFRRYYKEAARRKGSTGENLLKLLESRLDNVVYRMGFGSTRAEARQLINHKGVLVNGQGINIPSYQVRAEDVVAVREKAKRQDRIKFALELAQARAEAEWIEINAGKLEGVFKRVPERSELAPDIQENLVVELYSK</sequence>
<gene>
    <name evidence="1" type="primary">rpsD</name>
    <name type="ordered locus">Noc_2301</name>
</gene>
<proteinExistence type="inferred from homology"/>
<evidence type="ECO:0000255" key="1">
    <source>
        <dbReference type="HAMAP-Rule" id="MF_01306"/>
    </source>
</evidence>
<evidence type="ECO:0000305" key="2"/>
<feature type="chain" id="PRO_0000228906" description="Small ribosomal subunit protein uS4">
    <location>
        <begin position="1"/>
        <end position="208"/>
    </location>
</feature>
<feature type="domain" description="S4 RNA-binding" evidence="1">
    <location>
        <begin position="98"/>
        <end position="164"/>
    </location>
</feature>
<keyword id="KW-1185">Reference proteome</keyword>
<keyword id="KW-0687">Ribonucleoprotein</keyword>
<keyword id="KW-0689">Ribosomal protein</keyword>
<keyword id="KW-0694">RNA-binding</keyword>
<keyword id="KW-0699">rRNA-binding</keyword>
<comment type="function">
    <text evidence="1">One of the primary rRNA binding proteins, it binds directly to 16S rRNA where it nucleates assembly of the body of the 30S subunit.</text>
</comment>
<comment type="function">
    <text evidence="1">With S5 and S12 plays an important role in translational accuracy.</text>
</comment>
<comment type="subunit">
    <text evidence="1">Part of the 30S ribosomal subunit. Contacts protein S5. The interaction surface between S4 and S5 is involved in control of translational fidelity.</text>
</comment>
<comment type="similarity">
    <text evidence="1">Belongs to the universal ribosomal protein uS4 family.</text>
</comment>
<name>RS4_NITOC</name>
<accession>Q3J8T7</accession>